<name>YLM1_CAEEL</name>
<sequence length="111" mass="12037">MKILSLILVILVLVVSTESAASNNIFSSIFSFGKKKPTSTPTPSYSKASASTSRCGVQASQCSAYECCNFDQTCLRNRCFPRLSNCPVTRDQCGNACCKTSEQCRNGKCSR</sequence>
<keyword id="KW-1185">Reference proteome</keyword>
<accession>P34375</accession>
<organism>
    <name type="scientific">Caenorhabditis elegans</name>
    <dbReference type="NCBI Taxonomy" id="6239"/>
    <lineage>
        <taxon>Eukaryota</taxon>
        <taxon>Metazoa</taxon>
        <taxon>Ecdysozoa</taxon>
        <taxon>Nematoda</taxon>
        <taxon>Chromadorea</taxon>
        <taxon>Rhabditida</taxon>
        <taxon>Rhabditina</taxon>
        <taxon>Rhabditomorpha</taxon>
        <taxon>Rhabditoidea</taxon>
        <taxon>Rhabditidae</taxon>
        <taxon>Peloderinae</taxon>
        <taxon>Caenorhabditis</taxon>
    </lineage>
</organism>
<reference key="1">
    <citation type="journal article" date="1994" name="Nature">
        <title>2.2 Mb of contiguous nucleotide sequence from chromosome III of C. elegans.</title>
        <authorList>
            <person name="Wilson R."/>
            <person name="Ainscough R."/>
            <person name="Anderson K."/>
            <person name="Baynes C."/>
            <person name="Berks M."/>
            <person name="Bonfield J."/>
            <person name="Burton J."/>
            <person name="Connell M."/>
            <person name="Copsey T."/>
            <person name="Cooper J."/>
            <person name="Coulson A."/>
            <person name="Craxton M."/>
            <person name="Dear S."/>
            <person name="Du Z."/>
            <person name="Durbin R."/>
            <person name="Favello A."/>
            <person name="Fraser A."/>
            <person name="Fulton L."/>
            <person name="Gardner A."/>
            <person name="Green P."/>
            <person name="Hawkins T."/>
            <person name="Hillier L."/>
            <person name="Jier M."/>
            <person name="Johnston L."/>
            <person name="Jones M."/>
            <person name="Kershaw J."/>
            <person name="Kirsten J."/>
            <person name="Laisster N."/>
            <person name="Latreille P."/>
            <person name="Lightning J."/>
            <person name="Lloyd C."/>
            <person name="Mortimore B."/>
            <person name="O'Callaghan M."/>
            <person name="Parsons J."/>
            <person name="Percy C."/>
            <person name="Rifken L."/>
            <person name="Roopra A."/>
            <person name="Saunders D."/>
            <person name="Shownkeen R."/>
            <person name="Sims M."/>
            <person name="Smaldon N."/>
            <person name="Smith A."/>
            <person name="Smith M."/>
            <person name="Sonnhammer E."/>
            <person name="Staden R."/>
            <person name="Sulston J."/>
            <person name="Thierry-Mieg J."/>
            <person name="Thomas K."/>
            <person name="Vaudin M."/>
            <person name="Vaughan K."/>
            <person name="Waterston R."/>
            <person name="Watson A."/>
            <person name="Weinstock L."/>
            <person name="Wilkinson-Sproat J."/>
            <person name="Wohldman P."/>
        </authorList>
    </citation>
    <scope>NUCLEOTIDE SEQUENCE [LARGE SCALE GENOMIC DNA]</scope>
    <source>
        <strain>Bristol N2</strain>
    </source>
</reference>
<reference key="2">
    <citation type="journal article" date="1998" name="Science">
        <title>Genome sequence of the nematode C. elegans: a platform for investigating biology.</title>
        <authorList>
            <consortium name="The C. elegans sequencing consortium"/>
        </authorList>
    </citation>
    <scope>NUCLEOTIDE SEQUENCE [LARGE SCALE GENOMIC DNA]</scope>
    <source>
        <strain>Bristol N2</strain>
    </source>
</reference>
<dbReference type="EMBL" id="FO080532">
    <property type="protein sequence ID" value="CCD64446.1"/>
    <property type="molecule type" value="Genomic_DNA"/>
</dbReference>
<dbReference type="PIR" id="S44787">
    <property type="entry name" value="S44787"/>
</dbReference>
<dbReference type="RefSeq" id="NP_498781.1">
    <property type="nucleotide sequence ID" value="NM_066380.4"/>
</dbReference>
<dbReference type="SMR" id="P34375"/>
<dbReference type="FunCoup" id="P34375">
    <property type="interactions" value="873"/>
</dbReference>
<dbReference type="PaxDb" id="6239-D2007.1"/>
<dbReference type="PeptideAtlas" id="P34375"/>
<dbReference type="EnsemblMetazoa" id="D2007.1.1">
    <property type="protein sequence ID" value="D2007.1.1"/>
    <property type="gene ID" value="WBGene00017041"/>
</dbReference>
<dbReference type="GeneID" id="183937"/>
<dbReference type="KEGG" id="cel:CELE_D2007.1"/>
<dbReference type="UCSC" id="D2007.1">
    <property type="organism name" value="c. elegans"/>
</dbReference>
<dbReference type="AGR" id="WB:WBGene00017041"/>
<dbReference type="CTD" id="183937"/>
<dbReference type="WormBase" id="D2007.1">
    <property type="protein sequence ID" value="CE00126"/>
    <property type="gene ID" value="WBGene00017041"/>
</dbReference>
<dbReference type="eggNOG" id="ENOG502THZE">
    <property type="taxonomic scope" value="Eukaryota"/>
</dbReference>
<dbReference type="HOGENOM" id="CLU_2199430_0_0_1"/>
<dbReference type="InParanoid" id="P34375"/>
<dbReference type="OMA" id="CSAYECC"/>
<dbReference type="OrthoDB" id="5832545at2759"/>
<dbReference type="PRO" id="PR:P34375"/>
<dbReference type="Proteomes" id="UP000001940">
    <property type="component" value="Chromosome III"/>
</dbReference>
<dbReference type="Bgee" id="WBGene00017041">
    <property type="expression patterns" value="Expressed in larva and 3 other cell types or tissues"/>
</dbReference>
<dbReference type="GO" id="GO:0045087">
    <property type="term" value="P:innate immune response"/>
    <property type="evidence" value="ECO:0007007"/>
    <property type="project" value="WormBase"/>
</dbReference>
<gene>
    <name type="ORF">D2007.1</name>
</gene>
<proteinExistence type="predicted"/>
<protein>
    <recommendedName>
        <fullName>Uncharacterized protein D2007.1</fullName>
    </recommendedName>
</protein>
<feature type="chain" id="PRO_0000065264" description="Uncharacterized protein D2007.1">
    <location>
        <begin position="1"/>
        <end position="111"/>
    </location>
</feature>